<comment type="function">
    <text evidence="1">Presumably involved in the processing and regular turnover of intracellular proteins. Catalyzes the removal of unsubstituted N-terminal amino acids from various peptides.</text>
</comment>
<comment type="catalytic activity">
    <reaction evidence="1">
        <text>Release of an N-terminal amino acid, Xaa-|-Yaa-, in which Xaa is preferably Leu, but may be other amino acids including Pro although not Arg or Lys, and Yaa may be Pro. Amino acid amides and methyl esters are also readily hydrolyzed, but rates on arylamides are exceedingly low.</text>
        <dbReference type="EC" id="3.4.11.1"/>
    </reaction>
</comment>
<comment type="catalytic activity">
    <reaction evidence="1">
        <text>Release of an N-terminal amino acid, preferentially leucine, but not glutamic or aspartic acids.</text>
        <dbReference type="EC" id="3.4.11.10"/>
    </reaction>
</comment>
<comment type="cofactor">
    <cofactor evidence="1">
        <name>Mn(2+)</name>
        <dbReference type="ChEBI" id="CHEBI:29035"/>
    </cofactor>
    <text evidence="1">Binds 2 manganese ions per subunit.</text>
</comment>
<comment type="subcellular location">
    <subcellularLocation>
        <location evidence="1">Cytoplasm</location>
    </subcellularLocation>
</comment>
<comment type="similarity">
    <text evidence="1">Belongs to the peptidase M17 family.</text>
</comment>
<dbReference type="EC" id="3.4.11.1" evidence="1"/>
<dbReference type="EC" id="3.4.11.10" evidence="1"/>
<dbReference type="EMBL" id="CP000241">
    <property type="protein sequence ID" value="ABF84616.1"/>
    <property type="molecule type" value="Genomic_DNA"/>
</dbReference>
<dbReference type="RefSeq" id="WP_000912854.1">
    <property type="nucleotide sequence ID" value="NC_008086.1"/>
</dbReference>
<dbReference type="SMR" id="Q1CTV6"/>
<dbReference type="MEROPS" id="M17.016"/>
<dbReference type="KEGG" id="hpa:HPAG1_0549"/>
<dbReference type="HOGENOM" id="CLU_013734_6_1_7"/>
<dbReference type="GO" id="GO:0005737">
    <property type="term" value="C:cytoplasm"/>
    <property type="evidence" value="ECO:0007669"/>
    <property type="project" value="UniProtKB-SubCell"/>
</dbReference>
<dbReference type="GO" id="GO:0030145">
    <property type="term" value="F:manganese ion binding"/>
    <property type="evidence" value="ECO:0007669"/>
    <property type="project" value="UniProtKB-UniRule"/>
</dbReference>
<dbReference type="GO" id="GO:0070006">
    <property type="term" value="F:metalloaminopeptidase activity"/>
    <property type="evidence" value="ECO:0007669"/>
    <property type="project" value="InterPro"/>
</dbReference>
<dbReference type="GO" id="GO:0006508">
    <property type="term" value="P:proteolysis"/>
    <property type="evidence" value="ECO:0007669"/>
    <property type="project" value="UniProtKB-KW"/>
</dbReference>
<dbReference type="CDD" id="cd00433">
    <property type="entry name" value="Peptidase_M17"/>
    <property type="match status" value="1"/>
</dbReference>
<dbReference type="Gene3D" id="3.40.220.10">
    <property type="entry name" value="Leucine Aminopeptidase, subunit E, domain 1"/>
    <property type="match status" value="1"/>
</dbReference>
<dbReference type="Gene3D" id="3.40.630.10">
    <property type="entry name" value="Zn peptidases"/>
    <property type="match status" value="1"/>
</dbReference>
<dbReference type="HAMAP" id="MF_00181">
    <property type="entry name" value="Cytosol_peptidase_M17"/>
    <property type="match status" value="1"/>
</dbReference>
<dbReference type="InterPro" id="IPR011356">
    <property type="entry name" value="Leucine_aapep/pepB"/>
</dbReference>
<dbReference type="InterPro" id="IPR043472">
    <property type="entry name" value="Macro_dom-like"/>
</dbReference>
<dbReference type="InterPro" id="IPR000819">
    <property type="entry name" value="Peptidase_M17_C"/>
</dbReference>
<dbReference type="InterPro" id="IPR023042">
    <property type="entry name" value="Peptidase_M17_leu_NH2_pept"/>
</dbReference>
<dbReference type="InterPro" id="IPR008283">
    <property type="entry name" value="Peptidase_M17_N"/>
</dbReference>
<dbReference type="NCBIfam" id="NF002079">
    <property type="entry name" value="PRK00913.3-1"/>
    <property type="match status" value="1"/>
</dbReference>
<dbReference type="NCBIfam" id="NF002081">
    <property type="entry name" value="PRK00913.3-3"/>
    <property type="match status" value="1"/>
</dbReference>
<dbReference type="PANTHER" id="PTHR11963:SF23">
    <property type="entry name" value="CYTOSOL AMINOPEPTIDASE"/>
    <property type="match status" value="1"/>
</dbReference>
<dbReference type="PANTHER" id="PTHR11963">
    <property type="entry name" value="LEUCINE AMINOPEPTIDASE-RELATED"/>
    <property type="match status" value="1"/>
</dbReference>
<dbReference type="Pfam" id="PF00883">
    <property type="entry name" value="Peptidase_M17"/>
    <property type="match status" value="1"/>
</dbReference>
<dbReference type="Pfam" id="PF02789">
    <property type="entry name" value="Peptidase_M17_N"/>
    <property type="match status" value="1"/>
</dbReference>
<dbReference type="PRINTS" id="PR00481">
    <property type="entry name" value="LAMNOPPTDASE"/>
</dbReference>
<dbReference type="SUPFAM" id="SSF52949">
    <property type="entry name" value="Macro domain-like"/>
    <property type="match status" value="1"/>
</dbReference>
<dbReference type="SUPFAM" id="SSF53187">
    <property type="entry name" value="Zn-dependent exopeptidases"/>
    <property type="match status" value="1"/>
</dbReference>
<dbReference type="PROSITE" id="PS00631">
    <property type="entry name" value="CYTOSOL_AP"/>
    <property type="match status" value="1"/>
</dbReference>
<organism>
    <name type="scientific">Helicobacter pylori (strain HPAG1)</name>
    <dbReference type="NCBI Taxonomy" id="357544"/>
    <lineage>
        <taxon>Bacteria</taxon>
        <taxon>Pseudomonadati</taxon>
        <taxon>Campylobacterota</taxon>
        <taxon>Epsilonproteobacteria</taxon>
        <taxon>Campylobacterales</taxon>
        <taxon>Helicobacteraceae</taxon>
        <taxon>Helicobacter</taxon>
    </lineage>
</organism>
<reference key="1">
    <citation type="journal article" date="2006" name="Proc. Natl. Acad. Sci. U.S.A.">
        <title>The complete genome sequence of a chronic atrophic gastritis Helicobacter pylori strain: evolution during disease progression.</title>
        <authorList>
            <person name="Oh J.D."/>
            <person name="Kling-Baeckhed H."/>
            <person name="Giannakis M."/>
            <person name="Xu J."/>
            <person name="Fulton R.S."/>
            <person name="Fulton L.A."/>
            <person name="Cordum H.S."/>
            <person name="Wang C."/>
            <person name="Elliott G."/>
            <person name="Edwards J."/>
            <person name="Mardis E.R."/>
            <person name="Engstrand L.G."/>
            <person name="Gordon J.I."/>
        </authorList>
    </citation>
    <scope>NUCLEOTIDE SEQUENCE [LARGE SCALE GENOMIC DNA]</scope>
    <source>
        <strain>HPAG1</strain>
    </source>
</reference>
<feature type="chain" id="PRO_1000019927" description="Probable cytosol aminopeptidase">
    <location>
        <begin position="1"/>
        <end position="496"/>
    </location>
</feature>
<feature type="active site" evidence="1">
    <location>
        <position position="270"/>
    </location>
</feature>
<feature type="active site" evidence="1">
    <location>
        <position position="344"/>
    </location>
</feature>
<feature type="binding site" evidence="1">
    <location>
        <position position="258"/>
    </location>
    <ligand>
        <name>Mn(2+)</name>
        <dbReference type="ChEBI" id="CHEBI:29035"/>
        <label>2</label>
    </ligand>
</feature>
<feature type="binding site" evidence="1">
    <location>
        <position position="263"/>
    </location>
    <ligand>
        <name>Mn(2+)</name>
        <dbReference type="ChEBI" id="CHEBI:29035"/>
        <label>1</label>
    </ligand>
</feature>
<feature type="binding site" evidence="1">
    <location>
        <position position="263"/>
    </location>
    <ligand>
        <name>Mn(2+)</name>
        <dbReference type="ChEBI" id="CHEBI:29035"/>
        <label>2</label>
    </ligand>
</feature>
<feature type="binding site" evidence="1">
    <location>
        <position position="281"/>
    </location>
    <ligand>
        <name>Mn(2+)</name>
        <dbReference type="ChEBI" id="CHEBI:29035"/>
        <label>2</label>
    </ligand>
</feature>
<feature type="binding site" evidence="1">
    <location>
        <position position="340"/>
    </location>
    <ligand>
        <name>Mn(2+)</name>
        <dbReference type="ChEBI" id="CHEBI:29035"/>
        <label>1</label>
    </ligand>
</feature>
<feature type="binding site" evidence="1">
    <location>
        <position position="342"/>
    </location>
    <ligand>
        <name>Mn(2+)</name>
        <dbReference type="ChEBI" id="CHEBI:29035"/>
        <label>1</label>
    </ligand>
</feature>
<feature type="binding site" evidence="1">
    <location>
        <position position="342"/>
    </location>
    <ligand>
        <name>Mn(2+)</name>
        <dbReference type="ChEBI" id="CHEBI:29035"/>
        <label>2</label>
    </ligand>
</feature>
<name>AMPA_HELPH</name>
<accession>Q1CTV6</accession>
<evidence type="ECO:0000255" key="1">
    <source>
        <dbReference type="HAMAP-Rule" id="MF_00181"/>
    </source>
</evidence>
<gene>
    <name evidence="1" type="primary">pepA</name>
    <name type="ordered locus">HPAG1_0549</name>
</gene>
<keyword id="KW-0031">Aminopeptidase</keyword>
<keyword id="KW-0963">Cytoplasm</keyword>
<keyword id="KW-0378">Hydrolase</keyword>
<keyword id="KW-0464">Manganese</keyword>
<keyword id="KW-0479">Metal-binding</keyword>
<keyword id="KW-0645">Protease</keyword>
<sequence length="496" mass="54445">MLKIKLEKTTFENAKAECGLVFIVNKDFSHAWVKNKELLETFKYEGEGVFLDQENKILYVGVKEDDVHLLRESACLAVRTLKKLAFKSVKVGVYTCGAHSKDNALLENLKALFLGLKLGLYEYDTFKSNKKESVLKEAIVALELHKPCEKTCTNSLEKSAKEALKYAEIMTESLNIVRDLVNTPPMIGTPVYMAEVAQKVAKENHLEIHVHDEKFLEEKKMNAFLAVNKASLGVNPPRLIHLVYKPKKAKKKIALVGKGLTYDCGGLSLKPADYMVTMKADKGGGSAVIGLLNALAKLGVEAEVHGIIGATENMIGPAAYKPDDILISKEGKSIEVRNTDAEGRLVLADCLSYAQDLNPDVIVDFATLTGACVVGLGEFTSAIMGHNEELKNLFETSGLESGELLAKLPFNRHLKKLIESKIADVCNISSSRYGGAITAGLFLNEFIRDEFKDKWLHIDIAGPAYVEKEWDVNSFGASGAGVRACTAFVEELLKKA</sequence>
<protein>
    <recommendedName>
        <fullName evidence="1">Probable cytosol aminopeptidase</fullName>
        <ecNumber evidence="1">3.4.11.1</ecNumber>
    </recommendedName>
    <alternativeName>
        <fullName evidence="1">Leucine aminopeptidase</fullName>
        <shortName evidence="1">LAP</shortName>
        <ecNumber evidence="1">3.4.11.10</ecNumber>
    </alternativeName>
    <alternativeName>
        <fullName evidence="1">Leucyl aminopeptidase</fullName>
    </alternativeName>
</protein>
<proteinExistence type="inferred from homology"/>